<name>MTFA_YERE8</name>
<sequence>MIKWLWKANQPQAEMLAQWREALNIPLLAPLNEEEQQRLVSVASHLLQQKRLVPLQGVVLTPLMQARLTLLFALPVMELGAKWLDGFHEVLIYPSPFVVDDDWQDDAGLVHSGQTVQSGQSWEQGPIVLNWQDIQDSFDLSGFNLVIHEAAHKLDMRNGGHSNGVPPIAMRDVAAWEYDLHQAMDNIQDEIDMVGVDAASMDAYAASDPAECFAVLSEYFFSAPELLENRFPLVYRHFCTFYRQDPLARLKRWENESQNIESSSPMG</sequence>
<gene>
    <name evidence="1" type="primary">mtfA</name>
    <name type="ordered locus">YE2610</name>
</gene>
<feature type="chain" id="PRO_0000316328" description="Mlc titration factor A">
    <location>
        <begin position="1"/>
        <end position="267"/>
    </location>
</feature>
<feature type="binding site" evidence="1">
    <location>
        <position position="111"/>
    </location>
    <ligand>
        <name>Zn(2+)</name>
        <dbReference type="ChEBI" id="CHEBI:29105"/>
    </ligand>
</feature>
<feature type="binding site" evidence="1">
    <location>
        <position position="148"/>
    </location>
    <ligand>
        <name>Zn(2+)</name>
        <dbReference type="ChEBI" id="CHEBI:29105"/>
    </ligand>
</feature>
<feature type="binding site" evidence="1">
    <location>
        <position position="152"/>
    </location>
    <ligand>
        <name>Zn(2+)</name>
        <dbReference type="ChEBI" id="CHEBI:29105"/>
    </ligand>
</feature>
<feature type="binding site" evidence="1">
    <location>
        <position position="211"/>
    </location>
    <ligand>
        <name>Zn(2+)</name>
        <dbReference type="ChEBI" id="CHEBI:29105"/>
    </ligand>
</feature>
<keyword id="KW-0031">Aminopeptidase</keyword>
<keyword id="KW-0963">Cytoplasm</keyword>
<keyword id="KW-0378">Hydrolase</keyword>
<keyword id="KW-0479">Metal-binding</keyword>
<keyword id="KW-0482">Metalloprotease</keyword>
<keyword id="KW-0645">Protease</keyword>
<keyword id="KW-0862">Zinc</keyword>
<evidence type="ECO:0000255" key="1">
    <source>
        <dbReference type="HAMAP-Rule" id="MF_01593"/>
    </source>
</evidence>
<reference key="1">
    <citation type="journal article" date="2006" name="PLoS Genet.">
        <title>The complete genome sequence and comparative genome analysis of the high pathogenicity Yersinia enterocolitica strain 8081.</title>
        <authorList>
            <person name="Thomson N.R."/>
            <person name="Howard S."/>
            <person name="Wren B.W."/>
            <person name="Holden M.T.G."/>
            <person name="Crossman L."/>
            <person name="Challis G.L."/>
            <person name="Churcher C."/>
            <person name="Mungall K."/>
            <person name="Brooks K."/>
            <person name="Chillingworth T."/>
            <person name="Feltwell T."/>
            <person name="Abdellah Z."/>
            <person name="Hauser H."/>
            <person name="Jagels K."/>
            <person name="Maddison M."/>
            <person name="Moule S."/>
            <person name="Sanders M."/>
            <person name="Whitehead S."/>
            <person name="Quail M.A."/>
            <person name="Dougan G."/>
            <person name="Parkhill J."/>
            <person name="Prentice M.B."/>
        </authorList>
    </citation>
    <scope>NUCLEOTIDE SEQUENCE [LARGE SCALE GENOMIC DNA]</scope>
    <source>
        <strain>NCTC 13174 / 8081</strain>
    </source>
</reference>
<organism>
    <name type="scientific">Yersinia enterocolitica serotype O:8 / biotype 1B (strain NCTC 13174 / 8081)</name>
    <dbReference type="NCBI Taxonomy" id="393305"/>
    <lineage>
        <taxon>Bacteria</taxon>
        <taxon>Pseudomonadati</taxon>
        <taxon>Pseudomonadota</taxon>
        <taxon>Gammaproteobacteria</taxon>
        <taxon>Enterobacterales</taxon>
        <taxon>Yersiniaceae</taxon>
        <taxon>Yersinia</taxon>
    </lineage>
</organism>
<protein>
    <recommendedName>
        <fullName evidence="1">Mlc titration factor A</fullName>
    </recommendedName>
    <alternativeName>
        <fullName evidence="1">Probable zinc metallopeptidase MtfA</fullName>
        <ecNumber evidence="1">3.4.11.-</ecNumber>
    </alternativeName>
</protein>
<comment type="function">
    <text evidence="1">Involved in the modulation of the activity of the glucose-phosphotransferase system (glucose-PTS). Interacts with the transcriptional repressor Mlc, preventing its interaction with DNA and leading to the modulation of expression of genes regulated by Mlc, including ptsG, which encodes the PTS system glucose-specific EIICB component.</text>
</comment>
<comment type="function">
    <text evidence="1">Shows zinc-dependent metallopeptidase activity.</text>
</comment>
<comment type="cofactor">
    <cofactor evidence="1">
        <name>Zn(2+)</name>
        <dbReference type="ChEBI" id="CHEBI:29105"/>
    </cofactor>
    <text evidence="1">Binds 1 zinc ion per subunit.</text>
</comment>
<comment type="subunit">
    <text evidence="1">Interacts with Mlc.</text>
</comment>
<comment type="subcellular location">
    <subcellularLocation>
        <location evidence="1">Cytoplasm</location>
    </subcellularLocation>
</comment>
<comment type="similarity">
    <text evidence="1">Belongs to the MtfA family.</text>
</comment>
<dbReference type="EC" id="3.4.11.-" evidence="1"/>
<dbReference type="EMBL" id="AM286415">
    <property type="protein sequence ID" value="CAL12647.1"/>
    <property type="molecule type" value="Genomic_DNA"/>
</dbReference>
<dbReference type="RefSeq" id="WP_011816639.1">
    <property type="nucleotide sequence ID" value="NC_008800.1"/>
</dbReference>
<dbReference type="RefSeq" id="YP_001006809.1">
    <property type="nucleotide sequence ID" value="NC_008800.1"/>
</dbReference>
<dbReference type="SMR" id="A1JTF2"/>
<dbReference type="MEROPS" id="M90.001"/>
<dbReference type="KEGG" id="yen:YE2610"/>
<dbReference type="PATRIC" id="fig|393305.7.peg.2770"/>
<dbReference type="eggNOG" id="COG3228">
    <property type="taxonomic scope" value="Bacteria"/>
</dbReference>
<dbReference type="HOGENOM" id="CLU_063037_2_0_6"/>
<dbReference type="OrthoDB" id="9786424at2"/>
<dbReference type="Proteomes" id="UP000000642">
    <property type="component" value="Chromosome"/>
</dbReference>
<dbReference type="GO" id="GO:0005829">
    <property type="term" value="C:cytosol"/>
    <property type="evidence" value="ECO:0007669"/>
    <property type="project" value="TreeGrafter"/>
</dbReference>
<dbReference type="GO" id="GO:0004177">
    <property type="term" value="F:aminopeptidase activity"/>
    <property type="evidence" value="ECO:0007669"/>
    <property type="project" value="UniProtKB-UniRule"/>
</dbReference>
<dbReference type="GO" id="GO:0008237">
    <property type="term" value="F:metallopeptidase activity"/>
    <property type="evidence" value="ECO:0007669"/>
    <property type="project" value="UniProtKB-UniRule"/>
</dbReference>
<dbReference type="GO" id="GO:0008270">
    <property type="term" value="F:zinc ion binding"/>
    <property type="evidence" value="ECO:0007669"/>
    <property type="project" value="UniProtKB-UniRule"/>
</dbReference>
<dbReference type="GO" id="GO:0006508">
    <property type="term" value="P:proteolysis"/>
    <property type="evidence" value="ECO:0007669"/>
    <property type="project" value="UniProtKB-KW"/>
</dbReference>
<dbReference type="CDD" id="cd20169">
    <property type="entry name" value="Peptidase_M90_mtfA"/>
    <property type="match status" value="1"/>
</dbReference>
<dbReference type="FunFam" id="1.10.472.150:FF:000001">
    <property type="entry name" value="Protein MtfA"/>
    <property type="match status" value="1"/>
</dbReference>
<dbReference type="FunFam" id="3.40.390.10:FF:000012">
    <property type="entry name" value="Protein MtfA"/>
    <property type="match status" value="1"/>
</dbReference>
<dbReference type="Gene3D" id="3.40.390.10">
    <property type="entry name" value="Collagenase (Catalytic Domain)"/>
    <property type="match status" value="1"/>
</dbReference>
<dbReference type="Gene3D" id="1.10.472.150">
    <property type="entry name" value="Glucose-regulated metallo-peptidase M90, N-terminal domain"/>
    <property type="match status" value="1"/>
</dbReference>
<dbReference type="HAMAP" id="MF_01593">
    <property type="entry name" value="MtfA"/>
    <property type="match status" value="1"/>
</dbReference>
<dbReference type="InterPro" id="IPR024079">
    <property type="entry name" value="MetalloPept_cat_dom_sf"/>
</dbReference>
<dbReference type="InterPro" id="IPR057256">
    <property type="entry name" value="MtfA_enterob"/>
</dbReference>
<dbReference type="InterPro" id="IPR010384">
    <property type="entry name" value="MtfA_fam"/>
</dbReference>
<dbReference type="InterPro" id="IPR042252">
    <property type="entry name" value="MtfA_N"/>
</dbReference>
<dbReference type="NCBIfam" id="NF011939">
    <property type="entry name" value="PRK15410.1"/>
    <property type="match status" value="1"/>
</dbReference>
<dbReference type="PANTHER" id="PTHR30164">
    <property type="entry name" value="MTFA PEPTIDASE"/>
    <property type="match status" value="1"/>
</dbReference>
<dbReference type="PANTHER" id="PTHR30164:SF2">
    <property type="entry name" value="PROTEIN MTFA"/>
    <property type="match status" value="1"/>
</dbReference>
<dbReference type="Pfam" id="PF06167">
    <property type="entry name" value="Peptidase_M90"/>
    <property type="match status" value="1"/>
</dbReference>
<dbReference type="SUPFAM" id="SSF55486">
    <property type="entry name" value="Metalloproteases ('zincins'), catalytic domain"/>
    <property type="match status" value="1"/>
</dbReference>
<accession>A1JTF2</accession>
<proteinExistence type="inferred from homology"/>